<protein>
    <recommendedName>
        <fullName evidence="4">Splicing factor cactin</fullName>
    </recommendedName>
</protein>
<name>CATIN_SCHPO</name>
<proteinExistence type="evidence at protein level"/>
<evidence type="ECO:0000256" key="1">
    <source>
        <dbReference type="SAM" id="MobiDB-lite"/>
    </source>
</evidence>
<evidence type="ECO:0000269" key="2">
    <source>
    </source>
</evidence>
<evidence type="ECO:0000269" key="3">
    <source>
    </source>
</evidence>
<evidence type="ECO:0000305" key="4"/>
<evidence type="ECO:0000312" key="5">
    <source>
        <dbReference type="PomBase" id="SPBC2F12.12c"/>
    </source>
</evidence>
<dbReference type="EMBL" id="CU329671">
    <property type="protein sequence ID" value="CAB10159.1"/>
    <property type="molecule type" value="Genomic_DNA"/>
</dbReference>
<dbReference type="PIR" id="T40129">
    <property type="entry name" value="T40129"/>
</dbReference>
<dbReference type="RefSeq" id="NP_595704.1">
    <property type="nucleotide sequence ID" value="NM_001021601.2"/>
</dbReference>
<dbReference type="SMR" id="O14342"/>
<dbReference type="BioGRID" id="276882">
    <property type="interactions" value="123"/>
</dbReference>
<dbReference type="FunCoup" id="O14342">
    <property type="interactions" value="769"/>
</dbReference>
<dbReference type="STRING" id="284812.O14342"/>
<dbReference type="PaxDb" id="4896-SPBC2F12.12c.1"/>
<dbReference type="EnsemblFungi" id="SPBC2F12.12c.1">
    <property type="protein sequence ID" value="SPBC2F12.12c.1:pep"/>
    <property type="gene ID" value="SPBC2F12.12c"/>
</dbReference>
<dbReference type="GeneID" id="2540353"/>
<dbReference type="KEGG" id="spo:2540353"/>
<dbReference type="PomBase" id="SPBC2F12.12c">
    <property type="gene designation" value="cay1"/>
</dbReference>
<dbReference type="VEuPathDB" id="FungiDB:SPBC2F12.12c"/>
<dbReference type="eggNOG" id="KOG2370">
    <property type="taxonomic scope" value="Eukaryota"/>
</dbReference>
<dbReference type="HOGENOM" id="CLU_011759_2_1_1"/>
<dbReference type="InParanoid" id="O14342"/>
<dbReference type="OMA" id="RNRRYWE"/>
<dbReference type="PhylomeDB" id="O14342"/>
<dbReference type="PRO" id="PR:O14342"/>
<dbReference type="Proteomes" id="UP000002485">
    <property type="component" value="Chromosome II"/>
</dbReference>
<dbReference type="GO" id="GO:0071013">
    <property type="term" value="C:catalytic step 2 spliceosome"/>
    <property type="evidence" value="ECO:0000250"/>
    <property type="project" value="PomBase"/>
</dbReference>
<dbReference type="GO" id="GO:0005737">
    <property type="term" value="C:cytoplasm"/>
    <property type="evidence" value="ECO:0000318"/>
    <property type="project" value="GO_Central"/>
</dbReference>
<dbReference type="GO" id="GO:0005681">
    <property type="term" value="C:spliceosomal complex"/>
    <property type="evidence" value="ECO:0000318"/>
    <property type="project" value="GO_Central"/>
</dbReference>
<dbReference type="GO" id="GO:0000380">
    <property type="term" value="P:alternative mRNA splicing, via spliceosome"/>
    <property type="evidence" value="ECO:0000315"/>
    <property type="project" value="PomBase"/>
</dbReference>
<dbReference type="GO" id="GO:0045292">
    <property type="term" value="P:mRNA cis splicing, via spliceosome"/>
    <property type="evidence" value="ECO:0000315"/>
    <property type="project" value="PomBase"/>
</dbReference>
<dbReference type="InterPro" id="IPR019134">
    <property type="entry name" value="Cactin_C"/>
</dbReference>
<dbReference type="InterPro" id="IPR018816">
    <property type="entry name" value="Cactin_central"/>
</dbReference>
<dbReference type="PANTHER" id="PTHR21737">
    <property type="entry name" value="POLYGLUTAMINE BINDING PROTEIN 1/MARVEL MEMBRANE-ASSOCIATING DOMAIN CONTAINING 3"/>
    <property type="match status" value="1"/>
</dbReference>
<dbReference type="PANTHER" id="PTHR21737:SF4">
    <property type="entry name" value="SPLICING FACTOR CACTIN"/>
    <property type="match status" value="1"/>
</dbReference>
<dbReference type="Pfam" id="PF10312">
    <property type="entry name" value="Cactin_mid"/>
    <property type="match status" value="1"/>
</dbReference>
<dbReference type="Pfam" id="PF09732">
    <property type="entry name" value="CactinC_cactus"/>
    <property type="match status" value="1"/>
</dbReference>
<dbReference type="SMART" id="SM01050">
    <property type="entry name" value="CactinC_cactus"/>
    <property type="match status" value="1"/>
</dbReference>
<accession>O14342</accession>
<gene>
    <name evidence="5" type="primary">cay1</name>
    <name evidence="5" type="ORF">SPBC2F12.12c</name>
</gene>
<reference key="1">
    <citation type="journal article" date="2002" name="Nature">
        <title>The genome sequence of Schizosaccharomyces pombe.</title>
        <authorList>
            <person name="Wood V."/>
            <person name="Gwilliam R."/>
            <person name="Rajandream M.A."/>
            <person name="Lyne M.H."/>
            <person name="Lyne R."/>
            <person name="Stewart A."/>
            <person name="Sgouros J.G."/>
            <person name="Peat N."/>
            <person name="Hayles J."/>
            <person name="Baker S.G."/>
            <person name="Basham D."/>
            <person name="Bowman S."/>
            <person name="Brooks K."/>
            <person name="Brown D."/>
            <person name="Brown S."/>
            <person name="Chillingworth T."/>
            <person name="Churcher C.M."/>
            <person name="Collins M."/>
            <person name="Connor R."/>
            <person name="Cronin A."/>
            <person name="Davis P."/>
            <person name="Feltwell T."/>
            <person name="Fraser A."/>
            <person name="Gentles S."/>
            <person name="Goble A."/>
            <person name="Hamlin N."/>
            <person name="Harris D.E."/>
            <person name="Hidalgo J."/>
            <person name="Hodgson G."/>
            <person name="Holroyd S."/>
            <person name="Hornsby T."/>
            <person name="Howarth S."/>
            <person name="Huckle E.J."/>
            <person name="Hunt S."/>
            <person name="Jagels K."/>
            <person name="James K.D."/>
            <person name="Jones L."/>
            <person name="Jones M."/>
            <person name="Leather S."/>
            <person name="McDonald S."/>
            <person name="McLean J."/>
            <person name="Mooney P."/>
            <person name="Moule S."/>
            <person name="Mungall K.L."/>
            <person name="Murphy L.D."/>
            <person name="Niblett D."/>
            <person name="Odell C."/>
            <person name="Oliver K."/>
            <person name="O'Neil S."/>
            <person name="Pearson D."/>
            <person name="Quail M.A."/>
            <person name="Rabbinowitsch E."/>
            <person name="Rutherford K.M."/>
            <person name="Rutter S."/>
            <person name="Saunders D."/>
            <person name="Seeger K."/>
            <person name="Sharp S."/>
            <person name="Skelton J."/>
            <person name="Simmonds M.N."/>
            <person name="Squares R."/>
            <person name="Squares S."/>
            <person name="Stevens K."/>
            <person name="Taylor K."/>
            <person name="Taylor R.G."/>
            <person name="Tivey A."/>
            <person name="Walsh S.V."/>
            <person name="Warren T."/>
            <person name="Whitehead S."/>
            <person name="Woodward J.R."/>
            <person name="Volckaert G."/>
            <person name="Aert R."/>
            <person name="Robben J."/>
            <person name="Grymonprez B."/>
            <person name="Weltjens I."/>
            <person name="Vanstreels E."/>
            <person name="Rieger M."/>
            <person name="Schaefer M."/>
            <person name="Mueller-Auer S."/>
            <person name="Gabel C."/>
            <person name="Fuchs M."/>
            <person name="Duesterhoeft A."/>
            <person name="Fritzc C."/>
            <person name="Holzer E."/>
            <person name="Moestl D."/>
            <person name="Hilbert H."/>
            <person name="Borzym K."/>
            <person name="Langer I."/>
            <person name="Beck A."/>
            <person name="Lehrach H."/>
            <person name="Reinhardt R."/>
            <person name="Pohl T.M."/>
            <person name="Eger P."/>
            <person name="Zimmermann W."/>
            <person name="Wedler H."/>
            <person name="Wambutt R."/>
            <person name="Purnelle B."/>
            <person name="Goffeau A."/>
            <person name="Cadieu E."/>
            <person name="Dreano S."/>
            <person name="Gloux S."/>
            <person name="Lelaure V."/>
            <person name="Mottier S."/>
            <person name="Galibert F."/>
            <person name="Aves S.J."/>
            <person name="Xiang Z."/>
            <person name="Hunt C."/>
            <person name="Moore K."/>
            <person name="Hurst S.M."/>
            <person name="Lucas M."/>
            <person name="Rochet M."/>
            <person name="Gaillardin C."/>
            <person name="Tallada V.A."/>
            <person name="Garzon A."/>
            <person name="Thode G."/>
            <person name="Daga R.R."/>
            <person name="Cruzado L."/>
            <person name="Jimenez J."/>
            <person name="Sanchez M."/>
            <person name="del Rey F."/>
            <person name="Benito J."/>
            <person name="Dominguez A."/>
            <person name="Revuelta J.L."/>
            <person name="Moreno S."/>
            <person name="Armstrong J."/>
            <person name="Forsburg S.L."/>
            <person name="Cerutti L."/>
            <person name="Lowe T."/>
            <person name="McCombie W.R."/>
            <person name="Paulsen I."/>
            <person name="Potashkin J."/>
            <person name="Shpakovski G.V."/>
            <person name="Ussery D."/>
            <person name="Barrell B.G."/>
            <person name="Nurse P."/>
        </authorList>
    </citation>
    <scope>NUCLEOTIDE SEQUENCE [LARGE SCALE GENOMIC DNA]</scope>
    <source>
        <strain>972 / ATCC 24843</strain>
    </source>
</reference>
<reference key="2">
    <citation type="journal article" date="2018" name="EMBO J.">
        <title>Sde2 is an intron-specific pre-mRNA splicing regulator activated by ubiquitin-like processing.</title>
        <authorList>
            <person name="Thakran P."/>
            <person name="Pandit P.A."/>
            <person name="Datta S."/>
            <person name="Kolathur K.K."/>
            <person name="Pleiss J.A."/>
            <person name="Mishra S.K."/>
        </authorList>
    </citation>
    <scope>FUNCTION</scope>
    <scope>INTERACTION WITH CDC5 AND SDE2</scope>
    <scope>DISRUPTION PHENOTYPE</scope>
</reference>
<reference key="3">
    <citation type="journal article" date="2022" name="Nucleic Acids Res.">
        <title>Splicing of branchpoint-distant exons is promoted by Cactin, Tls1 and the ubiquitin-fold-activated Sde2.</title>
        <authorList>
            <person name="Anil A.T."/>
            <person name="Choudhary K."/>
            <person name="Pandian R."/>
            <person name="Gupta P."/>
            <person name="Thakran P."/>
            <person name="Singh A."/>
            <person name="Sharma M."/>
            <person name="Mishra S.K."/>
        </authorList>
    </citation>
    <scope>FUNCTION</scope>
    <scope>DISRUPTION PHENOTYPE</scope>
</reference>
<feature type="chain" id="PRO_0000116498" description="Splicing factor cactin">
    <location>
        <begin position="1"/>
        <end position="517"/>
    </location>
</feature>
<feature type="region of interest" description="Disordered" evidence="1">
    <location>
        <begin position="1"/>
        <end position="59"/>
    </location>
</feature>
<feature type="compositionally biased region" description="Basic and acidic residues" evidence="1">
    <location>
        <begin position="1"/>
        <end position="14"/>
    </location>
</feature>
<feature type="compositionally biased region" description="Low complexity" evidence="1">
    <location>
        <begin position="22"/>
        <end position="32"/>
    </location>
</feature>
<feature type="compositionally biased region" description="Basic and acidic residues" evidence="1">
    <location>
        <begin position="44"/>
        <end position="59"/>
    </location>
</feature>
<comment type="function">
    <text evidence="2 3">Plays a role in pre-mRNA splicing by facilitating excision of introns featuring long spacing between the branchpoint and 3'-splice site (ss) (PubMed:28947618, PubMed:36095128). Recruited to the spliceosome by sde2, which may enable folding of the RNA between the BP and 3'-ss to guide the splice site towards the spliceosome's catalytic center (PubMed:28947618, PubMed:36095128). Assists the splicing of several components involved in chromatin organization (PubMed:28947618, PubMed:36095128).</text>
</comment>
<comment type="subunit">
    <text evidence="2">Interacts with sde2 (PubMed:28947618). Interacts with cdc5 (PubMed:28947618).</text>
</comment>
<comment type="disruption phenotype">
    <text evidence="2 3">Leads to abnormal splicing of introns featuring long spacing between the branchpoint and 3'-splice site (PubMed:36095128). Sensitive to cold and thermal stress; simultaneous knockout of tls1 exacerbates the growth defect at both higher and lower temperature (PubMed:28947618, PubMed:36095128).</text>
</comment>
<comment type="similarity">
    <text evidence="4">Belongs to the CACTIN family.</text>
</comment>
<organism>
    <name type="scientific">Schizosaccharomyces pombe (strain 972 / ATCC 24843)</name>
    <name type="common">Fission yeast</name>
    <dbReference type="NCBI Taxonomy" id="284812"/>
    <lineage>
        <taxon>Eukaryota</taxon>
        <taxon>Fungi</taxon>
        <taxon>Dikarya</taxon>
        <taxon>Ascomycota</taxon>
        <taxon>Taphrinomycotina</taxon>
        <taxon>Schizosaccharomycetes</taxon>
        <taxon>Schizosaccharomycetales</taxon>
        <taxon>Schizosaccharomycetaceae</taxon>
        <taxon>Schizosaccharomyces</taxon>
    </lineage>
</organism>
<sequence>MAFRDSTRDFNRSRPEKRHASRSSSPRSFRPSNQNARANYNLPRVRDAMKEEERSRETKEMQEREFLRLQQLRRAIIRLKNDRSKPIDKLLVSVYLMPGPEWEENGEKNSIDFGTVDMFDPLSVIQSYKAEDLEEISRNIGDIQQLETNQCRLTYWKYVKMLVNSRMEHNKVGQFSRGLKVVAGEVQRILAPKSFEQLEQLEAQIQKKLKSNVPLDTDYWVDLLNSLKSYKAIAYLKKTFNEELQIRKNKLDNEEWDKAFSDAKKLSNMKDREEKLYIVPIDPKPILRAQAIPRRIQPEEQADYEKELNDHVNIVKSSTYIPISIPTQKQKPTLPKNSNLINEDEFSIANRARLEREYLQSDDAEEQEMLGDYVEGQTRVVNENGVTLKKPHYFNRVLLGFEWNSYNQAHFNEAHPPPKAVQGYRFNVFYPDLIGTGRAPTYRIERTRRKNKSDTTDLQDDVCIIRFIAGEPYQDIAFSIVDKDWDYSAKRDHGFKSSFDNGVLSLHFRFKKLHHRR</sequence>
<keyword id="KW-1185">Reference proteome</keyword>